<dbReference type="EMBL" id="CH408031">
    <property type="protein sequence ID" value="EAQ89765.1"/>
    <property type="molecule type" value="Genomic_DNA"/>
</dbReference>
<dbReference type="RefSeq" id="XP_001222479.1">
    <property type="nucleotide sequence ID" value="XM_001222478.1"/>
</dbReference>
<dbReference type="STRING" id="306901.Q2H4N1"/>
<dbReference type="GeneID" id="4390111"/>
<dbReference type="VEuPathDB" id="FungiDB:CHGG_06384"/>
<dbReference type="eggNOG" id="KOG1877">
    <property type="taxonomic scope" value="Eukaryota"/>
</dbReference>
<dbReference type="HOGENOM" id="CLU_003271_0_0_1"/>
<dbReference type="InParanoid" id="Q2H4N1"/>
<dbReference type="OMA" id="ATHVYYT"/>
<dbReference type="OrthoDB" id="19232at2759"/>
<dbReference type="Proteomes" id="UP000001056">
    <property type="component" value="Unassembled WGS sequence"/>
</dbReference>
<dbReference type="GO" id="GO:0005886">
    <property type="term" value="C:plasma membrane"/>
    <property type="evidence" value="ECO:0007669"/>
    <property type="project" value="TreeGrafter"/>
</dbReference>
<dbReference type="GO" id="GO:0072659">
    <property type="term" value="P:protein localization to plasma membrane"/>
    <property type="evidence" value="ECO:0007669"/>
    <property type="project" value="InterPro"/>
</dbReference>
<dbReference type="InterPro" id="IPR016024">
    <property type="entry name" value="ARM-type_fold"/>
</dbReference>
<dbReference type="InterPro" id="IPR039786">
    <property type="entry name" value="EFR3"/>
</dbReference>
<dbReference type="InterPro" id="IPR049150">
    <property type="entry name" value="EFR3_HEAT-like_rpt"/>
</dbReference>
<dbReference type="PANTHER" id="PTHR47766">
    <property type="entry name" value="PROTEIN EFR3"/>
    <property type="match status" value="1"/>
</dbReference>
<dbReference type="PANTHER" id="PTHR47766:SF1">
    <property type="entry name" value="PROTEIN EFR3"/>
    <property type="match status" value="1"/>
</dbReference>
<dbReference type="Pfam" id="PF21072">
    <property type="entry name" value="EFR3"/>
    <property type="match status" value="1"/>
</dbReference>
<dbReference type="SUPFAM" id="SSF48371">
    <property type="entry name" value="ARM repeat"/>
    <property type="match status" value="1"/>
</dbReference>
<gene>
    <name type="primary">EFR3</name>
    <name type="ORF">CHGG_06384</name>
</gene>
<evidence type="ECO:0000256" key="1">
    <source>
        <dbReference type="SAM" id="MobiDB-lite"/>
    </source>
</evidence>
<evidence type="ECO:0000305" key="2"/>
<accession>Q2H4N1</accession>
<organism>
    <name type="scientific">Chaetomium globosum (strain ATCC 6205 / CBS 148.51 / DSM 1962 / NBRC 6347 / NRRL 1970)</name>
    <name type="common">Soil fungus</name>
    <dbReference type="NCBI Taxonomy" id="306901"/>
    <lineage>
        <taxon>Eukaryota</taxon>
        <taxon>Fungi</taxon>
        <taxon>Dikarya</taxon>
        <taxon>Ascomycota</taxon>
        <taxon>Pezizomycotina</taxon>
        <taxon>Sordariomycetes</taxon>
        <taxon>Sordariomycetidae</taxon>
        <taxon>Sordariales</taxon>
        <taxon>Chaetomiaceae</taxon>
        <taxon>Chaetomium</taxon>
    </lineage>
</organism>
<sequence>MNAIQQKCRPKHQVLVLKCYPRTAKGAVDVKPNSSELSYLLFYAQSRRSKIQKVGSFLEKKTASDVWRQRIGNVQVTLQILTALIEKTPKDLPLFASCVLQILEQILKSRDITMVESSIPTFEAFCTHHDPTSLLADQAYLRQYLDVVQQYASLASTRAFAGKLEPSKPIALRWRNTGLKAIKSVASSDSLSSVATQQYDLAVPMILENLWTDNEDFLDVLHQRAEMGEKLGGALLRRRTSVATVQTAESESNTNPIALADTAVDMDKLAEEDTGVLAMECLRQIFVATNRSQVHAATVALLKFIQERVSQQEEVVRTDSDGRDSGWAVKMFLLAARWAPVADRFTILVTAMDSLAQQPLTDEALQQHIVLAAMIGALLRSDINLIGLSVMDVLLQLIAHIRKVVQMPGDPNSMRSEPHLPGEPDPRAQTVLQFADKAEQAVAERKNVLLRLQECIGDLATHVYYADQISDMISTILQKLRPTRSNSISGSPHGDKSDTPKSSVNALADEHHADSLFALTVAKIAALRAIKSVLLVANPRTKMSGNLGLSRSHVPIQIWDGTQWLLKDQDGLVRKAYADAVMTWLDRETTSADWKARDETARPMLKTRELQGAALAKRAVSSASAREKPVKVPRSHFLQLLHLAIYDNAIDYIDYETDILLLHLLLAKLVDKLGVNAVRYGLPMIFRLQEDIQDAETPIHKVRLGSLVHGYFWMLTEKFDFEGTVIGRAIHNEIVRRRSKNFWVDGVNLPVPLLDLIGTPGTVQRQPKLPSDEIESEALLPFDERLALVECVCTAYQEQTTSPPQSPAASPGRSFSHPMLGSTTSAIPSIETEHEVPDHIREQMLSEWTREAVLAAVQTASKTASLSGSRSGTTGTNRLNANGGLAANGHNPRAERSSPHGSGTNLRPSTSPMGDAMRKSSLRGHSPTPASNNGDAKEQVTSVEQLKLVLSGHLQPPPTMHGPTTFQHDDSSSDSLVSYDMTPSELSFNPATLPGAIPDHHHHHHHHQSPPQQRPVSRDRKGSVSASASAGGSGGPLNSHPTPDDMYNNSEYVSADDGDDDDDDAVPPVPPIPTGLMAEGGGSPSGSPRGGRLPSSSSSPSSKAQQQHQQHHERAAAAAVAALRRPSTSKRSVKSRGGGEHRALSSSWASMGGEDEKAPGMDLNALLKGIDAHVGEDQGLGGFGGVARPPY</sequence>
<comment type="similarity">
    <text evidence="2">Belongs to the EFR3 family.</text>
</comment>
<name>EFR3_CHAGB</name>
<feature type="chain" id="PRO_0000270774" description="Protein EFR3">
    <location>
        <begin position="1"/>
        <end position="1191"/>
    </location>
</feature>
<feature type="region of interest" description="Disordered" evidence="1">
    <location>
        <begin position="484"/>
        <end position="503"/>
    </location>
</feature>
<feature type="region of interest" description="Disordered" evidence="1">
    <location>
        <begin position="800"/>
        <end position="824"/>
    </location>
</feature>
<feature type="region of interest" description="Disordered" evidence="1">
    <location>
        <begin position="861"/>
        <end position="940"/>
    </location>
</feature>
<feature type="region of interest" description="Disordered" evidence="1">
    <location>
        <begin position="953"/>
        <end position="1160"/>
    </location>
</feature>
<feature type="compositionally biased region" description="Low complexity" evidence="1">
    <location>
        <begin position="800"/>
        <end position="811"/>
    </location>
</feature>
<feature type="compositionally biased region" description="Low complexity" evidence="1">
    <location>
        <begin position="867"/>
        <end position="891"/>
    </location>
</feature>
<feature type="compositionally biased region" description="Polar residues" evidence="1">
    <location>
        <begin position="899"/>
        <end position="912"/>
    </location>
</feature>
<feature type="compositionally biased region" description="Polar residues" evidence="1">
    <location>
        <begin position="928"/>
        <end position="940"/>
    </location>
</feature>
<feature type="compositionally biased region" description="Acidic residues" evidence="1">
    <location>
        <begin position="1054"/>
        <end position="1065"/>
    </location>
</feature>
<feature type="compositionally biased region" description="Low complexity" evidence="1">
    <location>
        <begin position="1085"/>
        <end position="1108"/>
    </location>
</feature>
<feature type="compositionally biased region" description="Low complexity" evidence="1">
    <location>
        <begin position="1116"/>
        <end position="1126"/>
    </location>
</feature>
<protein>
    <recommendedName>
        <fullName>Protein EFR3</fullName>
    </recommendedName>
</protein>
<reference key="1">
    <citation type="journal article" date="2015" name="Genome Announc.">
        <title>Draft genome sequence of the cellulolytic fungus Chaetomium globosum.</title>
        <authorList>
            <person name="Cuomo C.A."/>
            <person name="Untereiner W.A."/>
            <person name="Ma L.-J."/>
            <person name="Grabherr M."/>
            <person name="Birren B.W."/>
        </authorList>
    </citation>
    <scope>NUCLEOTIDE SEQUENCE [LARGE SCALE GENOMIC DNA]</scope>
    <source>
        <strain>ATCC 6205 / CBS 148.51 / DSM 1962 / NBRC 6347 / NRRL 1970</strain>
    </source>
</reference>
<proteinExistence type="inferred from homology"/>
<keyword id="KW-1185">Reference proteome</keyword>